<dbReference type="EMBL" id="CP000410">
    <property type="protein sequence ID" value="ABJ53923.1"/>
    <property type="molecule type" value="Genomic_DNA"/>
</dbReference>
<dbReference type="RefSeq" id="WP_000960946.1">
    <property type="nucleotide sequence ID" value="NZ_JAMLJR010000002.1"/>
</dbReference>
<dbReference type="SMR" id="Q04MM9"/>
<dbReference type="PaxDb" id="373153-SPD_0200"/>
<dbReference type="GeneID" id="93738964"/>
<dbReference type="KEGG" id="spd:SPD_0200"/>
<dbReference type="eggNOG" id="COG0197">
    <property type="taxonomic scope" value="Bacteria"/>
</dbReference>
<dbReference type="HOGENOM" id="CLU_078858_2_1_9"/>
<dbReference type="BioCyc" id="SPNE373153:G1G6V-223-MONOMER"/>
<dbReference type="Proteomes" id="UP000001452">
    <property type="component" value="Chromosome"/>
</dbReference>
<dbReference type="GO" id="GO:0022625">
    <property type="term" value="C:cytosolic large ribosomal subunit"/>
    <property type="evidence" value="ECO:0007669"/>
    <property type="project" value="TreeGrafter"/>
</dbReference>
<dbReference type="GO" id="GO:0019843">
    <property type="term" value="F:rRNA binding"/>
    <property type="evidence" value="ECO:0007669"/>
    <property type="project" value="UniProtKB-UniRule"/>
</dbReference>
<dbReference type="GO" id="GO:0003735">
    <property type="term" value="F:structural constituent of ribosome"/>
    <property type="evidence" value="ECO:0007669"/>
    <property type="project" value="InterPro"/>
</dbReference>
<dbReference type="GO" id="GO:0000049">
    <property type="term" value="F:tRNA binding"/>
    <property type="evidence" value="ECO:0007669"/>
    <property type="project" value="UniProtKB-KW"/>
</dbReference>
<dbReference type="GO" id="GO:0006412">
    <property type="term" value="P:translation"/>
    <property type="evidence" value="ECO:0007669"/>
    <property type="project" value="UniProtKB-UniRule"/>
</dbReference>
<dbReference type="CDD" id="cd01433">
    <property type="entry name" value="Ribosomal_L16_L10e"/>
    <property type="match status" value="1"/>
</dbReference>
<dbReference type="FunFam" id="3.90.1170.10:FF:000001">
    <property type="entry name" value="50S ribosomal protein L16"/>
    <property type="match status" value="1"/>
</dbReference>
<dbReference type="Gene3D" id="3.90.1170.10">
    <property type="entry name" value="Ribosomal protein L10e/L16"/>
    <property type="match status" value="1"/>
</dbReference>
<dbReference type="HAMAP" id="MF_01342">
    <property type="entry name" value="Ribosomal_uL16"/>
    <property type="match status" value="1"/>
</dbReference>
<dbReference type="InterPro" id="IPR047873">
    <property type="entry name" value="Ribosomal_uL16"/>
</dbReference>
<dbReference type="InterPro" id="IPR000114">
    <property type="entry name" value="Ribosomal_uL16_bact-type"/>
</dbReference>
<dbReference type="InterPro" id="IPR020798">
    <property type="entry name" value="Ribosomal_uL16_CS"/>
</dbReference>
<dbReference type="InterPro" id="IPR016180">
    <property type="entry name" value="Ribosomal_uL16_dom"/>
</dbReference>
<dbReference type="InterPro" id="IPR036920">
    <property type="entry name" value="Ribosomal_uL16_sf"/>
</dbReference>
<dbReference type="NCBIfam" id="TIGR01164">
    <property type="entry name" value="rplP_bact"/>
    <property type="match status" value="1"/>
</dbReference>
<dbReference type="PANTHER" id="PTHR12220">
    <property type="entry name" value="50S/60S RIBOSOMAL PROTEIN L16"/>
    <property type="match status" value="1"/>
</dbReference>
<dbReference type="PANTHER" id="PTHR12220:SF13">
    <property type="entry name" value="LARGE RIBOSOMAL SUBUNIT PROTEIN UL16M"/>
    <property type="match status" value="1"/>
</dbReference>
<dbReference type="Pfam" id="PF00252">
    <property type="entry name" value="Ribosomal_L16"/>
    <property type="match status" value="1"/>
</dbReference>
<dbReference type="PRINTS" id="PR00060">
    <property type="entry name" value="RIBOSOMALL16"/>
</dbReference>
<dbReference type="SUPFAM" id="SSF54686">
    <property type="entry name" value="Ribosomal protein L16p/L10e"/>
    <property type="match status" value="1"/>
</dbReference>
<dbReference type="PROSITE" id="PS00586">
    <property type="entry name" value="RIBOSOMAL_L16_1"/>
    <property type="match status" value="1"/>
</dbReference>
<dbReference type="PROSITE" id="PS00701">
    <property type="entry name" value="RIBOSOMAL_L16_2"/>
    <property type="match status" value="1"/>
</dbReference>
<protein>
    <recommendedName>
        <fullName evidence="1">Large ribosomal subunit protein uL16</fullName>
    </recommendedName>
    <alternativeName>
        <fullName evidence="2">50S ribosomal protein L16</fullName>
    </alternativeName>
</protein>
<proteinExistence type="inferred from homology"/>
<organism>
    <name type="scientific">Streptococcus pneumoniae serotype 2 (strain D39 / NCTC 7466)</name>
    <dbReference type="NCBI Taxonomy" id="373153"/>
    <lineage>
        <taxon>Bacteria</taxon>
        <taxon>Bacillati</taxon>
        <taxon>Bacillota</taxon>
        <taxon>Bacilli</taxon>
        <taxon>Lactobacillales</taxon>
        <taxon>Streptococcaceae</taxon>
        <taxon>Streptococcus</taxon>
    </lineage>
</organism>
<reference key="1">
    <citation type="journal article" date="2007" name="J. Bacteriol.">
        <title>Genome sequence of Avery's virulent serotype 2 strain D39 of Streptococcus pneumoniae and comparison with that of unencapsulated laboratory strain R6.</title>
        <authorList>
            <person name="Lanie J.A."/>
            <person name="Ng W.-L."/>
            <person name="Kazmierczak K.M."/>
            <person name="Andrzejewski T.M."/>
            <person name="Davidsen T.M."/>
            <person name="Wayne K.J."/>
            <person name="Tettelin H."/>
            <person name="Glass J.I."/>
            <person name="Winkler M.E."/>
        </authorList>
    </citation>
    <scope>NUCLEOTIDE SEQUENCE [LARGE SCALE GENOMIC DNA]</scope>
    <source>
        <strain>D39 / NCTC 7466</strain>
    </source>
</reference>
<evidence type="ECO:0000255" key="1">
    <source>
        <dbReference type="HAMAP-Rule" id="MF_01342"/>
    </source>
</evidence>
<evidence type="ECO:0000305" key="2"/>
<name>RL16_STRP2</name>
<keyword id="KW-1185">Reference proteome</keyword>
<keyword id="KW-0687">Ribonucleoprotein</keyword>
<keyword id="KW-0689">Ribosomal protein</keyword>
<keyword id="KW-0694">RNA-binding</keyword>
<keyword id="KW-0699">rRNA-binding</keyword>
<keyword id="KW-0820">tRNA-binding</keyword>
<gene>
    <name evidence="1" type="primary">rplP</name>
    <name type="ordered locus">SPD_0200</name>
</gene>
<feature type="chain" id="PRO_1000054714" description="Large ribosomal subunit protein uL16">
    <location>
        <begin position="1"/>
        <end position="137"/>
    </location>
</feature>
<sequence length="137" mass="15436">MLVPKRVKHRREFRGKMRGEAKGGKEVAFGEYGLQATTSHWITNRQIEAARIAMTRYMKRGGKVWIKIFPHKSYTAKAIGVRMGSGKGAPEGWVAPVKRGKVMFEIAGVSEEIAREALRLASHKLPVKCKFVKREAE</sequence>
<accession>Q04MM9</accession>
<comment type="function">
    <text evidence="1">Binds 23S rRNA and is also seen to make contacts with the A and possibly P site tRNAs.</text>
</comment>
<comment type="subunit">
    <text evidence="1">Part of the 50S ribosomal subunit.</text>
</comment>
<comment type="similarity">
    <text evidence="1">Belongs to the universal ribosomal protein uL16 family.</text>
</comment>